<gene>
    <name type="primary">ETR2</name>
</gene>
<organism>
    <name type="scientific">Candida tropicalis</name>
    <name type="common">Yeast</name>
    <dbReference type="NCBI Taxonomy" id="5482"/>
    <lineage>
        <taxon>Eukaryota</taxon>
        <taxon>Fungi</taxon>
        <taxon>Dikarya</taxon>
        <taxon>Ascomycota</taxon>
        <taxon>Saccharomycotina</taxon>
        <taxon>Pichiomycetes</taxon>
        <taxon>Debaryomycetaceae</taxon>
        <taxon>Candida/Lodderomyces clade</taxon>
        <taxon>Candida</taxon>
    </lineage>
</organism>
<comment type="function">
    <text evidence="3">Required for respiration and the maintenance of the mitochondrial compartment. Oxidoreductase with a preference for short and medium chain substrates, including trans-2-hexenoyl-CoA (C6), trans-2-decenoyl-CoA (C10), and trans-2-hexadecenoyl-CoA (C16). May play a role in mitochondrial fatty acid synthesis.</text>
</comment>
<comment type="catalytic activity">
    <reaction evidence="3">
        <text>a 2,3-saturated acyl-[ACP] + NADP(+) = a (2E)-enoyl-[ACP] + NADPH + H(+)</text>
        <dbReference type="Rhea" id="RHEA:22564"/>
        <dbReference type="Rhea" id="RHEA-COMP:9925"/>
        <dbReference type="Rhea" id="RHEA-COMP:9926"/>
        <dbReference type="ChEBI" id="CHEBI:15378"/>
        <dbReference type="ChEBI" id="CHEBI:57783"/>
        <dbReference type="ChEBI" id="CHEBI:58349"/>
        <dbReference type="ChEBI" id="CHEBI:78784"/>
        <dbReference type="ChEBI" id="CHEBI:78785"/>
        <dbReference type="EC" id="1.3.1.104"/>
    </reaction>
</comment>
<comment type="subunit">
    <text evidence="3">Homodimer and heterodimer with ETR1.</text>
</comment>
<comment type="subcellular location">
    <subcellularLocation>
        <location>Mitochondrion</location>
    </subcellularLocation>
</comment>
<comment type="induction">
    <text evidence="3">Up-regulated by growth on oleic acid.</text>
</comment>
<comment type="similarity">
    <text evidence="5">Belongs to the zinc-containing alcohol dehydrogenase family. Quinone oxidoreductase subfamily.</text>
</comment>
<accession>Q8WZM4</accession>
<reference key="1">
    <citation type="journal article" date="2003" name="J. Biol. Chem.">
        <title>Candida tropicalis expresses two mitochondrial 2-enoyl thioester reductases that are able to form both homodimers and heterodimers.</title>
        <authorList>
            <person name="Torkko J.M."/>
            <person name="Koivuranta K.T."/>
            <person name="Kastaniotis A.J."/>
            <person name="Airenne T.T."/>
            <person name="Glumoff T."/>
            <person name="Ilves M."/>
            <person name="Hartig A."/>
            <person name="Gurvitz A."/>
            <person name="Hiltunen J.K."/>
        </authorList>
    </citation>
    <scope>NUCLEOTIDE SEQUENCE [GENOMIC DNA]</scope>
    <scope>FUNCTION</scope>
    <scope>SUBUNIT</scope>
    <scope>X-RAY CRYSTALLOGRAPHY (1.98 ANGSTROMS) IN COMPLEX WITH NADP</scope>
    <scope>INDUCTION BY OLEIC ACID</scope>
    <scope>CATALYTIC ACTIVITY</scope>
    <source>
        <strain>ATCC 20336 / pK233 / NCYC 997</strain>
    </source>
</reference>
<reference key="2">
    <citation type="submission" date="2002-06" db="PDB data bank">
        <title>Crystal structure of enoyl thioester reductase 2.</title>
        <authorList>
            <person name="Airenne T.T."/>
            <person name="Torkko J.M."/>
            <person name="Hiltunen J.K."/>
        </authorList>
    </citation>
    <scope>X-RAY CRYSTALLOGRAPHY (2.11 ANGSTROMS)</scope>
</reference>
<sequence>MYSVLKQSIRPRLLATHNQFRTMITAQAVLYTQHGEPKDVLFTQSFEIDDDNLAPNEVIVKTLGSPINPSDINQIQGVYPSKPAKTTGFGTAEPAAPCGNEGLFEVIKVGSNVSSLEAGDWVIPSHVNFGTWRTHALGNDDDFIKLPNPAQSKANGKPNGLTINQGATISVNPLTAYLMLTHYVKLTPGKDWFIQNGGTSAVGKYASQIGKLLNFNSISVIRDRPNLDEVVASLKELGATQVITEDQNNSKEFGPTIKEWIKQSGGEAKLALNCVGGKSSTGIARKLNNNGLMLTYGGMSFQPVTIPTSLYIFKNFTSAGFWVTELLKNNKELKTSTLNQIIAWYEEGKLTDAKSIETLYDGTKPLHELYQDGVANSKDGKQLITY</sequence>
<dbReference type="EC" id="1.3.1.104" evidence="6"/>
<dbReference type="EMBL" id="U94996">
    <property type="protein sequence ID" value="AAL55471.1"/>
    <property type="molecule type" value="Genomic_DNA"/>
</dbReference>
<dbReference type="PDB" id="1H0K">
    <property type="method" value="X-ray"/>
    <property type="resolution" value="2.11 A"/>
    <property type="chains" value="A/B=23-386"/>
</dbReference>
<dbReference type="PDB" id="1N9G">
    <property type="method" value="X-ray"/>
    <property type="resolution" value="1.98 A"/>
    <property type="chains" value="A/C/F=1-386"/>
</dbReference>
<dbReference type="PDBsum" id="1H0K"/>
<dbReference type="PDBsum" id="1N9G"/>
<dbReference type="SMR" id="Q8WZM4"/>
<dbReference type="IntAct" id="Q8WZM4">
    <property type="interactions" value="1"/>
</dbReference>
<dbReference type="VEuPathDB" id="FungiDB:CTMYA2_052270"/>
<dbReference type="VEuPathDB" id="FungiDB:CTRG_06166"/>
<dbReference type="EvolutionaryTrace" id="Q8WZM4"/>
<dbReference type="GO" id="GO:0005739">
    <property type="term" value="C:mitochondrion"/>
    <property type="evidence" value="ECO:0007669"/>
    <property type="project" value="UniProtKB-SubCell"/>
</dbReference>
<dbReference type="GO" id="GO:0141148">
    <property type="term" value="F:enoyl-[acyl-carrier-protein] reductase (NADPH) activity"/>
    <property type="evidence" value="ECO:0007669"/>
    <property type="project" value="UniProtKB-EC"/>
</dbReference>
<dbReference type="GO" id="GO:0019166">
    <property type="term" value="F:trans-2-enoyl-CoA reductase (NADPH) activity"/>
    <property type="evidence" value="ECO:0000314"/>
    <property type="project" value="UniProtKB"/>
</dbReference>
<dbReference type="GO" id="GO:0006633">
    <property type="term" value="P:fatty acid biosynthetic process"/>
    <property type="evidence" value="ECO:0007669"/>
    <property type="project" value="UniProtKB-KW"/>
</dbReference>
<dbReference type="GO" id="GO:0006631">
    <property type="term" value="P:fatty acid metabolic process"/>
    <property type="evidence" value="ECO:0000314"/>
    <property type="project" value="UniProtKB"/>
</dbReference>
<dbReference type="CDD" id="cd08290">
    <property type="entry name" value="ETR"/>
    <property type="match status" value="1"/>
</dbReference>
<dbReference type="FunFam" id="3.40.50.720:FF:000112">
    <property type="entry name" value="Enoyl-[acyl-carrier-protein] reductase 1, mitochondrial"/>
    <property type="match status" value="1"/>
</dbReference>
<dbReference type="FunFam" id="3.90.180.10:FF:000073">
    <property type="entry name" value="Enoyl-[acyl-carrier-protein] reductase 1, mitochondrial"/>
    <property type="match status" value="1"/>
</dbReference>
<dbReference type="Gene3D" id="3.90.180.10">
    <property type="entry name" value="Medium-chain alcohol dehydrogenases, catalytic domain"/>
    <property type="match status" value="1"/>
</dbReference>
<dbReference type="Gene3D" id="3.40.50.720">
    <property type="entry name" value="NAD(P)-binding Rossmann-like Domain"/>
    <property type="match status" value="1"/>
</dbReference>
<dbReference type="InterPro" id="IPR013149">
    <property type="entry name" value="ADH-like_C"/>
</dbReference>
<dbReference type="InterPro" id="IPR013154">
    <property type="entry name" value="ADH-like_N"/>
</dbReference>
<dbReference type="InterPro" id="IPR011032">
    <property type="entry name" value="GroES-like_sf"/>
</dbReference>
<dbReference type="InterPro" id="IPR051034">
    <property type="entry name" value="Mito_Enoyl-ACP_Reductase"/>
</dbReference>
<dbReference type="InterPro" id="IPR036291">
    <property type="entry name" value="NAD(P)-bd_dom_sf"/>
</dbReference>
<dbReference type="InterPro" id="IPR020843">
    <property type="entry name" value="PKS_ER"/>
</dbReference>
<dbReference type="PANTHER" id="PTHR43981">
    <property type="entry name" value="ENOYL-[ACYL-CARRIER-PROTEIN] REDUCTASE, MITOCHONDRIAL"/>
    <property type="match status" value="1"/>
</dbReference>
<dbReference type="PANTHER" id="PTHR43981:SF2">
    <property type="entry name" value="ENOYL-[ACYL-CARRIER-PROTEIN] REDUCTASE, MITOCHONDRIAL"/>
    <property type="match status" value="1"/>
</dbReference>
<dbReference type="Pfam" id="PF08240">
    <property type="entry name" value="ADH_N"/>
    <property type="match status" value="1"/>
</dbReference>
<dbReference type="Pfam" id="PF00107">
    <property type="entry name" value="ADH_zinc_N"/>
    <property type="match status" value="1"/>
</dbReference>
<dbReference type="SMART" id="SM00829">
    <property type="entry name" value="PKS_ER"/>
    <property type="match status" value="1"/>
</dbReference>
<dbReference type="SUPFAM" id="SSF50129">
    <property type="entry name" value="GroES-like"/>
    <property type="match status" value="1"/>
</dbReference>
<dbReference type="SUPFAM" id="SSF51735">
    <property type="entry name" value="NAD(P)-binding Rossmann-fold domains"/>
    <property type="match status" value="1"/>
</dbReference>
<name>ETR2_CANTR</name>
<keyword id="KW-0002">3D-structure</keyword>
<keyword id="KW-0275">Fatty acid biosynthesis</keyword>
<keyword id="KW-0276">Fatty acid metabolism</keyword>
<keyword id="KW-0444">Lipid biosynthesis</keyword>
<keyword id="KW-0443">Lipid metabolism</keyword>
<keyword id="KW-0496">Mitochondrion</keyword>
<keyword id="KW-0521">NADP</keyword>
<keyword id="KW-0560">Oxidoreductase</keyword>
<keyword id="KW-0809">Transit peptide</keyword>
<evidence type="ECO:0000250" key="1">
    <source>
        <dbReference type="UniProtKB" id="Q8WZM3"/>
    </source>
</evidence>
<evidence type="ECO:0000255" key="2"/>
<evidence type="ECO:0000269" key="3">
    <source>
    </source>
</evidence>
<evidence type="ECO:0000303" key="4">
    <source>
    </source>
</evidence>
<evidence type="ECO:0000305" key="5"/>
<evidence type="ECO:0000305" key="6">
    <source>
    </source>
</evidence>
<evidence type="ECO:0007829" key="7">
    <source>
        <dbReference type="PDB" id="1H0K"/>
    </source>
</evidence>
<evidence type="ECO:0007829" key="8">
    <source>
        <dbReference type="PDB" id="1N9G"/>
    </source>
</evidence>
<protein>
    <recommendedName>
        <fullName evidence="5">Enoyl-[acyl-carrier-protein] reductase 2, mitochondrial</fullName>
        <ecNumber evidence="6">1.3.1.104</ecNumber>
    </recommendedName>
    <alternativeName>
        <fullName evidence="4">2-enoyl thioester reductase 2</fullName>
    </alternativeName>
</protein>
<proteinExistence type="evidence at protein level"/>
<feature type="transit peptide" description="Mitochondrion" evidence="2">
    <location>
        <begin position="1"/>
        <end position="22"/>
    </location>
</feature>
<feature type="chain" id="PRO_0000000899" description="Enoyl-[acyl-carrier-protein] reductase 2, mitochondrial">
    <location>
        <begin position="23"/>
        <end position="386"/>
    </location>
</feature>
<feature type="active site" description="Proton donor" evidence="1">
    <location>
        <position position="79"/>
    </location>
</feature>
<feature type="binding site" evidence="3">
    <location>
        <position position="172"/>
    </location>
    <ligand>
        <name>NADP(+)</name>
        <dbReference type="ChEBI" id="CHEBI:58349"/>
    </ligand>
</feature>
<feature type="binding site" evidence="3">
    <location>
        <begin position="199"/>
        <end position="202"/>
    </location>
    <ligand>
        <name>NADP(+)</name>
        <dbReference type="ChEBI" id="CHEBI:58349"/>
    </ligand>
</feature>
<feature type="binding site" evidence="3">
    <location>
        <begin position="222"/>
        <end position="224"/>
    </location>
    <ligand>
        <name>NADP(+)</name>
        <dbReference type="ChEBI" id="CHEBI:58349"/>
    </ligand>
</feature>
<feature type="binding site" evidence="3">
    <location>
        <begin position="296"/>
        <end position="299"/>
    </location>
    <ligand>
        <name>NADP(+)</name>
        <dbReference type="ChEBI" id="CHEBI:58349"/>
    </ligand>
</feature>
<feature type="binding site" evidence="3">
    <location>
        <begin position="321"/>
        <end position="323"/>
    </location>
    <ligand>
        <name>NADP(+)</name>
        <dbReference type="ChEBI" id="CHEBI:58349"/>
    </ligand>
</feature>
<feature type="binding site" evidence="3">
    <location>
        <position position="381"/>
    </location>
    <ligand>
        <name>NADP(+)</name>
        <dbReference type="ChEBI" id="CHEBI:58349"/>
    </ligand>
</feature>
<feature type="strand" evidence="8">
    <location>
        <begin position="24"/>
        <end position="33"/>
    </location>
</feature>
<feature type="helix" evidence="8">
    <location>
        <begin position="37"/>
        <end position="40"/>
    </location>
</feature>
<feature type="strand" evidence="8">
    <location>
        <begin position="42"/>
        <end position="48"/>
    </location>
</feature>
<feature type="strand" evidence="8">
    <location>
        <begin position="57"/>
        <end position="67"/>
    </location>
</feature>
<feature type="helix" evidence="8">
    <location>
        <begin position="69"/>
        <end position="76"/>
    </location>
</feature>
<feature type="strand" evidence="8">
    <location>
        <begin position="95"/>
        <end position="97"/>
    </location>
</feature>
<feature type="strand" evidence="8">
    <location>
        <begin position="103"/>
        <end position="109"/>
    </location>
</feature>
<feature type="strand" evidence="8">
    <location>
        <begin position="121"/>
        <end position="127"/>
    </location>
</feature>
<feature type="strand" evidence="8">
    <location>
        <begin position="132"/>
        <end position="139"/>
    </location>
</feature>
<feature type="helix" evidence="8">
    <location>
        <begin position="140"/>
        <end position="142"/>
    </location>
</feature>
<feature type="strand" evidence="8">
    <location>
        <begin position="143"/>
        <end position="146"/>
    </location>
</feature>
<feature type="helix" evidence="8">
    <location>
        <begin position="149"/>
        <end position="154"/>
    </location>
</feature>
<feature type="helix" evidence="8">
    <location>
        <begin position="163"/>
        <end position="167"/>
    </location>
</feature>
<feature type="strand" evidence="7">
    <location>
        <begin position="169"/>
        <end position="171"/>
    </location>
</feature>
<feature type="helix" evidence="8">
    <location>
        <begin position="172"/>
        <end position="181"/>
    </location>
</feature>
<feature type="strand" evidence="8">
    <location>
        <begin position="182"/>
        <end position="184"/>
    </location>
</feature>
<feature type="turn" evidence="8">
    <location>
        <begin position="188"/>
        <end position="190"/>
    </location>
</feature>
<feature type="strand" evidence="8">
    <location>
        <begin position="192"/>
        <end position="196"/>
    </location>
</feature>
<feature type="helix" evidence="8">
    <location>
        <begin position="201"/>
        <end position="213"/>
    </location>
</feature>
<feature type="strand" evidence="8">
    <location>
        <begin position="216"/>
        <end position="221"/>
    </location>
</feature>
<feature type="helix" evidence="8">
    <location>
        <begin position="227"/>
        <end position="237"/>
    </location>
</feature>
<feature type="strand" evidence="8">
    <location>
        <begin position="240"/>
        <end position="244"/>
    </location>
</feature>
<feature type="helix" evidence="8">
    <location>
        <begin position="245"/>
        <end position="249"/>
    </location>
</feature>
<feature type="turn" evidence="8">
    <location>
        <begin position="251"/>
        <end position="253"/>
    </location>
</feature>
<feature type="helix" evidence="8">
    <location>
        <begin position="254"/>
        <end position="264"/>
    </location>
</feature>
<feature type="strand" evidence="8">
    <location>
        <begin position="268"/>
        <end position="275"/>
    </location>
</feature>
<feature type="helix" evidence="8">
    <location>
        <begin position="277"/>
        <end position="285"/>
    </location>
</feature>
<feature type="strand" evidence="8">
    <location>
        <begin position="292"/>
        <end position="295"/>
    </location>
</feature>
<feature type="helix" evidence="8">
    <location>
        <begin position="299"/>
        <end position="301"/>
    </location>
</feature>
<feature type="strand" evidence="8">
    <location>
        <begin position="304"/>
        <end position="306"/>
    </location>
</feature>
<feature type="helix" evidence="8">
    <location>
        <begin position="308"/>
        <end position="313"/>
    </location>
</feature>
<feature type="strand" evidence="8">
    <location>
        <begin position="317"/>
        <end position="320"/>
    </location>
</feature>
<feature type="helix" evidence="8">
    <location>
        <begin position="323"/>
        <end position="326"/>
    </location>
</feature>
<feature type="turn" evidence="8">
    <location>
        <begin position="327"/>
        <end position="329"/>
    </location>
</feature>
<feature type="helix" evidence="8">
    <location>
        <begin position="331"/>
        <end position="346"/>
    </location>
</feature>
<feature type="strand" evidence="8">
    <location>
        <begin position="356"/>
        <end position="359"/>
    </location>
</feature>
<feature type="strand" evidence="8">
    <location>
        <begin position="362"/>
        <end position="364"/>
    </location>
</feature>
<feature type="helix" evidence="8">
    <location>
        <begin position="366"/>
        <end position="375"/>
    </location>
</feature>
<feature type="helix" evidence="8">
    <location>
        <begin position="377"/>
        <end position="379"/>
    </location>
</feature>
<feature type="strand" evidence="8">
    <location>
        <begin position="382"/>
        <end position="385"/>
    </location>
</feature>